<gene>
    <name type="primary">Bub1b</name>
    <name type="synonym">Mad3l</name>
</gene>
<organism>
    <name type="scientific">Mus musculus</name>
    <name type="common">Mouse</name>
    <dbReference type="NCBI Taxonomy" id="10090"/>
    <lineage>
        <taxon>Eukaryota</taxon>
        <taxon>Metazoa</taxon>
        <taxon>Chordata</taxon>
        <taxon>Craniata</taxon>
        <taxon>Vertebrata</taxon>
        <taxon>Euteleostomi</taxon>
        <taxon>Mammalia</taxon>
        <taxon>Eutheria</taxon>
        <taxon>Euarchontoglires</taxon>
        <taxon>Glires</taxon>
        <taxon>Rodentia</taxon>
        <taxon>Myomorpha</taxon>
        <taxon>Muroidea</taxon>
        <taxon>Muridae</taxon>
        <taxon>Murinae</taxon>
        <taxon>Mus</taxon>
        <taxon>Mus</taxon>
    </lineage>
</organism>
<reference key="1">
    <citation type="journal article" date="1999" name="Genomics">
        <title>The mouse mitotic checkpoint gene bub1b, a novel bub1 family member, is expressed in a cell cycle-dependent manner.</title>
        <authorList>
            <person name="Davenport J.W."/>
            <person name="Fernandes E.R."/>
            <person name="Harris L.D."/>
            <person name="Neale G.A.M."/>
            <person name="Goorha R."/>
        </authorList>
    </citation>
    <scope>NUCLEOTIDE SEQUENCE [MRNA]</scope>
    <source>
        <strain>NIH Swiss</strain>
        <tissue>Embryo</tissue>
    </source>
</reference>
<reference key="2">
    <citation type="journal article" date="2009" name="PLoS Biol.">
        <title>Lineage-specific biology revealed by a finished genome assembly of the mouse.</title>
        <authorList>
            <person name="Church D.M."/>
            <person name="Goodstadt L."/>
            <person name="Hillier L.W."/>
            <person name="Zody M.C."/>
            <person name="Goldstein S."/>
            <person name="She X."/>
            <person name="Bult C.J."/>
            <person name="Agarwala R."/>
            <person name="Cherry J.L."/>
            <person name="DiCuccio M."/>
            <person name="Hlavina W."/>
            <person name="Kapustin Y."/>
            <person name="Meric P."/>
            <person name="Maglott D."/>
            <person name="Birtle Z."/>
            <person name="Marques A.C."/>
            <person name="Graves T."/>
            <person name="Zhou S."/>
            <person name="Teague B."/>
            <person name="Potamousis K."/>
            <person name="Churas C."/>
            <person name="Place M."/>
            <person name="Herschleb J."/>
            <person name="Runnheim R."/>
            <person name="Forrest D."/>
            <person name="Amos-Landgraf J."/>
            <person name="Schwartz D.C."/>
            <person name="Cheng Z."/>
            <person name="Lindblad-Toh K."/>
            <person name="Eichler E.E."/>
            <person name="Ponting C.P."/>
        </authorList>
    </citation>
    <scope>NUCLEOTIDE SEQUENCE [LARGE SCALE GENOMIC DNA]</scope>
    <source>
        <strain>C57BL/6J</strain>
    </source>
</reference>
<reference key="3">
    <citation type="journal article" date="2003" name="J. Cell Biol.">
        <title>Centromere-associated protein-E is essential for the mammalian mitotic checkpoint to prevent aneuploidy due to single chromosome loss.</title>
        <authorList>
            <person name="Weaver B.A."/>
            <person name="Bonday Z.Q."/>
            <person name="Putkey F.R."/>
            <person name="Kops G.J."/>
            <person name="Silk A.D."/>
            <person name="Cleveland D.W."/>
        </authorList>
    </citation>
    <scope>ACTIVITY REGULATION</scope>
    <scope>INTERACTION WITH CENPE</scope>
    <scope>SUBCELLULAR LOCATION</scope>
</reference>
<reference key="4">
    <citation type="journal article" date="2004" name="Cancer Res.">
        <title>Slippage of mitotic arrest and enhanced tumor development in mice with BubR1 haploinsufficiency.</title>
        <authorList>
            <person name="Dai W."/>
            <person name="Wang Q."/>
            <person name="Liu T."/>
            <person name="Swamy M."/>
            <person name="Fang Y."/>
            <person name="Xie S."/>
            <person name="Mahmood R."/>
            <person name="Yang Y.M."/>
            <person name="Xu M."/>
            <person name="Rao C.V."/>
        </authorList>
    </citation>
    <scope>FUNCTION</scope>
</reference>
<reference key="5">
    <citation type="journal article" date="2004" name="Nat. Genet.">
        <title>BubR1 insufficiency causes early onset of aging-associated phenotypes and infertility in mice.</title>
        <authorList>
            <person name="Baker D.J."/>
            <person name="Jeganathan K.B."/>
            <person name="Cameron J.D."/>
            <person name="Thompson M."/>
            <person name="Juneja S."/>
            <person name="Kopecka A."/>
            <person name="Kumar R."/>
            <person name="Jenkins R.B."/>
            <person name="de Groen P.C."/>
            <person name="Roche P."/>
            <person name="van Deursen J.M."/>
        </authorList>
    </citation>
    <scope>FUNCTION</scope>
    <scope>DISRUPTION PHENOTYPE</scope>
</reference>
<reference key="6">
    <citation type="journal article" date="2007" name="Dev. Cell">
        <title>Bub1 maintains centromeric cohesion by activation of the spindle checkpoint.</title>
        <authorList>
            <person name="Perera D."/>
            <person name="Tilston V."/>
            <person name="Hopwood J.A."/>
            <person name="Barchi M."/>
            <person name="Boot-Handford R.P."/>
            <person name="Taylor S.S."/>
        </authorList>
    </citation>
    <scope>SUBCELLULAR LOCATION</scope>
</reference>
<reference key="7">
    <citation type="journal article" date="2010" name="Cell">
        <title>A tissue-specific atlas of mouse protein phosphorylation and expression.</title>
        <authorList>
            <person name="Huttlin E.L."/>
            <person name="Jedrychowski M.P."/>
            <person name="Elias J.E."/>
            <person name="Goswami T."/>
            <person name="Rad R."/>
            <person name="Beausoleil S.A."/>
            <person name="Villen J."/>
            <person name="Haas W."/>
            <person name="Sowa M.E."/>
            <person name="Gygi S.P."/>
        </authorList>
    </citation>
    <scope>PHOSPHORYLATION [LARGE SCALE ANALYSIS] AT SER-1050</scope>
    <scope>IDENTIFICATION BY MASS SPECTROMETRY [LARGE SCALE ANALYSIS]</scope>
    <source>
        <tissue>Testis</tissue>
    </source>
</reference>
<comment type="function">
    <text evidence="1 8 9">Essential component of the mitotic checkpoint. Required for normal mitosis progression and tumor suppression. The mitotic checkpoint delays anaphase until all chromosomes are properly attached to the mitotic spindle. One of its checkpoint functions is to inhibit the activity of the anaphase-promoting complex/cyclosome (APC/C) by blocking the binding of CDC20 to APC/C, independently of its kinase activity. The other is to monitor kinetochore activities that depend on the kinetochore motor CENPE. Required for kinetochore localization of CENPE. Negatively regulates PLK1 activity in interphase cells and suppresses centrosome amplification. Also implicated in triggering apoptosis in polyploid cells that exit aberrantly from mitotic arrest. Essential for tumor suppression. May play a role in regulating aging and fertility (By similarity).</text>
</comment>
<comment type="catalytic activity">
    <reaction>
        <text>L-seryl-[protein] + ATP = O-phospho-L-seryl-[protein] + ADP + H(+)</text>
        <dbReference type="Rhea" id="RHEA:17989"/>
        <dbReference type="Rhea" id="RHEA-COMP:9863"/>
        <dbReference type="Rhea" id="RHEA-COMP:11604"/>
        <dbReference type="ChEBI" id="CHEBI:15378"/>
        <dbReference type="ChEBI" id="CHEBI:29999"/>
        <dbReference type="ChEBI" id="CHEBI:30616"/>
        <dbReference type="ChEBI" id="CHEBI:83421"/>
        <dbReference type="ChEBI" id="CHEBI:456216"/>
        <dbReference type="EC" id="2.7.11.1"/>
    </reaction>
</comment>
<comment type="catalytic activity">
    <reaction>
        <text>L-threonyl-[protein] + ATP = O-phospho-L-threonyl-[protein] + ADP + H(+)</text>
        <dbReference type="Rhea" id="RHEA:46608"/>
        <dbReference type="Rhea" id="RHEA-COMP:11060"/>
        <dbReference type="Rhea" id="RHEA-COMP:11605"/>
        <dbReference type="ChEBI" id="CHEBI:15378"/>
        <dbReference type="ChEBI" id="CHEBI:30013"/>
        <dbReference type="ChEBI" id="CHEBI:30616"/>
        <dbReference type="ChEBI" id="CHEBI:61977"/>
        <dbReference type="ChEBI" id="CHEBI:456216"/>
        <dbReference type="EC" id="2.7.11.1"/>
    </reaction>
</comment>
<comment type="activity regulation">
    <text evidence="7">Kinase activity stimulated by CENPE.</text>
</comment>
<comment type="subunit">
    <text evidence="2 7">Interacts with CENPE (PubMed:12925705). Interacts with PLK1 (By similarity). Part of a complex containing BUB3, CDC20 and BUB1B (By similarity). Interacts with anaphase-promoting complex/cyclosome (APC/C) (By similarity). Interacts with KNL1 (By similarity). Interacts with KAT2B (By similarity). Interacts with RIPK3 (By similarity). Interacts with the closed conformation form of MAD2L1 (By similarity). Interacts with CDC20 (By similarity).</text>
</comment>
<comment type="subcellular location">
    <subcellularLocation>
        <location evidence="1">Cytoplasm</location>
    </subcellularLocation>
    <subcellularLocation>
        <location evidence="1">Nucleus</location>
    </subcellularLocation>
    <subcellularLocation>
        <location evidence="7 10">Chromosome</location>
        <location evidence="7 10">Centromere</location>
        <location evidence="7 10">Kinetochore</location>
    </subcellularLocation>
    <text evidence="1">Cytoplasmic in interphase cells (By similarity). Associates with the kinetochores in early prophase. Kinetochore localization requires BUB1, PLK1 and KNL1 (By similarity).</text>
</comment>
<comment type="tissue specificity">
    <text>Highly expressed in thymus followed by spleen.</text>
</comment>
<comment type="domain">
    <text evidence="11">The D-box targets the protein for rapid degradation by ubiquitin-dependent proteolysis during the transition from mitosis to interphase.</text>
</comment>
<comment type="domain">
    <text>The BUB1 N-terminal domain directs kinetochore localization and binding to BUB3.</text>
</comment>
<comment type="PTM">
    <text evidence="1">Proteolytically cleaved by caspase-3 in a cell cycle specific manner. The cleavage might be involved in the durability of the cell cycle delay.</text>
</comment>
<comment type="PTM">
    <text evidence="2">Acetylation at Lys-243 regulates its degradation and timing in anaphase entry.</text>
</comment>
<comment type="PTM">
    <text evidence="2">Ubiquitinated. Degraded by the proteasome. Ubiquitinated by UBR5, promoting disassembly of the mitotic checkpoint complex from the APC/C complex.</text>
</comment>
<comment type="PTM">
    <text evidence="2">Sumoylated with SUMO2 and SUMO3. The sumoylation mediates the association with CENPE at the kinetochore (By similarity).</text>
</comment>
<comment type="PTM">
    <text evidence="2">Autophosphorylated in vitro. Intramolecular autophosphorylation stimulated by CENPE. Phosphorylated during mitosis and hyperphosphorylated in mitotically arrested cells. Phosphorylation at Ser-659 and Ser-1033 occurs at kinetochores upon mitotic entry with dephosphorylation at the onset of anaphase.</text>
</comment>
<comment type="PTM">
    <text evidence="2">Proteolytically cleaved by caspase-3 in a cell cycle specific manner. The cleavage might be involved in the durability of the cell cycle delay. Caspase-3 cleavage is associated with abrogation of the mitotic checkpoint. The major site of cleavage is at Asp-603.</text>
</comment>
<comment type="disease">
    <text>Defects in Bub1b are involved in the development of lung and intestinal adenocarcinomas after exposure to a carcinogen.</text>
</comment>
<comment type="disruption phenotype">
    <text evidence="9">Mice die in utero.</text>
</comment>
<comment type="similarity">
    <text evidence="4">Belongs to the protein kinase superfamily. Ser/Thr protein kinase family. BUB1 subfamily.</text>
</comment>
<protein>
    <recommendedName>
        <fullName>Mitotic checkpoint serine/threonine-protein kinase BUB1 beta</fullName>
        <ecNumber>2.7.11.1</ecNumber>
    </recommendedName>
    <alternativeName>
        <fullName>MAD3/BUB1-related protein kinase</fullName>
        <shortName>BubR1</shortName>
    </alternativeName>
    <alternativeName>
        <fullName>Mitotic checkpoint kinase MAD3L</fullName>
    </alternativeName>
</protein>
<dbReference type="EC" id="2.7.11.1"/>
<dbReference type="EMBL" id="AF107296">
    <property type="protein sequence ID" value="AAD11940.1"/>
    <property type="molecule type" value="mRNA"/>
</dbReference>
<dbReference type="EMBL" id="AL845470">
    <property type="status" value="NOT_ANNOTATED_CDS"/>
    <property type="molecule type" value="Genomic_DNA"/>
</dbReference>
<dbReference type="EMBL" id="AL929381">
    <property type="status" value="NOT_ANNOTATED_CDS"/>
    <property type="molecule type" value="Genomic_DNA"/>
</dbReference>
<dbReference type="CCDS" id="CCDS16579.1"/>
<dbReference type="RefSeq" id="NP_033903.2">
    <property type="nucleotide sequence ID" value="NM_009773.3"/>
</dbReference>
<dbReference type="SMR" id="Q9Z1S0"/>
<dbReference type="BioGRID" id="198405">
    <property type="interactions" value="62"/>
</dbReference>
<dbReference type="ComplexPortal" id="CPX-3968">
    <property type="entry name" value="Mitotic Checkpoint Complex"/>
</dbReference>
<dbReference type="FunCoup" id="Q9Z1S0">
    <property type="interactions" value="698"/>
</dbReference>
<dbReference type="IntAct" id="Q9Z1S0">
    <property type="interactions" value="47"/>
</dbReference>
<dbReference type="STRING" id="10090.ENSMUSP00000037126"/>
<dbReference type="iPTMnet" id="Q9Z1S0"/>
<dbReference type="PhosphoSitePlus" id="Q9Z1S0"/>
<dbReference type="jPOST" id="Q9Z1S0"/>
<dbReference type="PaxDb" id="10090-ENSMUSP00000037126"/>
<dbReference type="PeptideAtlas" id="Q9Z1S0"/>
<dbReference type="ProteomicsDB" id="265320"/>
<dbReference type="Pumba" id="Q9Z1S0"/>
<dbReference type="Antibodypedia" id="1214">
    <property type="antibodies" value="770 antibodies from 43 providers"/>
</dbReference>
<dbReference type="DNASU" id="12236"/>
<dbReference type="Ensembl" id="ENSMUST00000038341.8">
    <property type="protein sequence ID" value="ENSMUSP00000037126.8"/>
    <property type="gene ID" value="ENSMUSG00000040084.10"/>
</dbReference>
<dbReference type="GeneID" id="12236"/>
<dbReference type="KEGG" id="mmu:12236"/>
<dbReference type="UCSC" id="uc008lse.2">
    <property type="organism name" value="mouse"/>
</dbReference>
<dbReference type="AGR" id="MGI:1333889"/>
<dbReference type="CTD" id="701"/>
<dbReference type="MGI" id="MGI:1333889">
    <property type="gene designation" value="Bub1b"/>
</dbReference>
<dbReference type="VEuPathDB" id="HostDB:ENSMUSG00000040084"/>
<dbReference type="eggNOG" id="KOG1166">
    <property type="taxonomic scope" value="Eukaryota"/>
</dbReference>
<dbReference type="GeneTree" id="ENSGT00940000158912"/>
<dbReference type="HOGENOM" id="CLU_010890_0_0_1"/>
<dbReference type="InParanoid" id="Q9Z1S0"/>
<dbReference type="OMA" id="KTLCPNP"/>
<dbReference type="OrthoDB" id="248495at2759"/>
<dbReference type="PhylomeDB" id="Q9Z1S0"/>
<dbReference type="TreeFam" id="TF105456"/>
<dbReference type="BRENDA" id="2.7.11.1">
    <property type="organism ID" value="3474"/>
</dbReference>
<dbReference type="Reactome" id="R-MMU-141430">
    <property type="pathway name" value="Inactivation of APC/C via direct inhibition of the APC/C complex"/>
</dbReference>
<dbReference type="Reactome" id="R-MMU-141444">
    <property type="pathway name" value="Amplification of signal from unattached kinetochores via a MAD2 inhibitory signal"/>
</dbReference>
<dbReference type="Reactome" id="R-MMU-174184">
    <property type="pathway name" value="Cdc20:Phospho-APC/C mediated degradation of Cyclin A"/>
</dbReference>
<dbReference type="Reactome" id="R-MMU-176409">
    <property type="pathway name" value="APC/C:Cdc20 mediated degradation of mitotic proteins"/>
</dbReference>
<dbReference type="Reactome" id="R-MMU-179409">
    <property type="pathway name" value="APC-Cdc20 mediated degradation of Nek2A"/>
</dbReference>
<dbReference type="Reactome" id="R-MMU-2467813">
    <property type="pathway name" value="Separation of Sister Chromatids"/>
</dbReference>
<dbReference type="Reactome" id="R-MMU-2500257">
    <property type="pathway name" value="Resolution of Sister Chromatid Cohesion"/>
</dbReference>
<dbReference type="Reactome" id="R-MMU-5663220">
    <property type="pathway name" value="RHO GTPases Activate Formins"/>
</dbReference>
<dbReference type="Reactome" id="R-MMU-68877">
    <property type="pathway name" value="Mitotic Prometaphase"/>
</dbReference>
<dbReference type="Reactome" id="R-MMU-9648025">
    <property type="pathway name" value="EML4 and NUDC in mitotic spindle formation"/>
</dbReference>
<dbReference type="BioGRID-ORCS" id="12236">
    <property type="hits" value="25 hits in 81 CRISPR screens"/>
</dbReference>
<dbReference type="ChiTaRS" id="Bub1b">
    <property type="organism name" value="mouse"/>
</dbReference>
<dbReference type="PRO" id="PR:Q9Z1S0"/>
<dbReference type="Proteomes" id="UP000000589">
    <property type="component" value="Chromosome 2"/>
</dbReference>
<dbReference type="RNAct" id="Q9Z1S0">
    <property type="molecule type" value="protein"/>
</dbReference>
<dbReference type="Bgee" id="ENSMUSG00000040084">
    <property type="expression patterns" value="Expressed in secondary oocyte and 234 other cell types or tissues"/>
</dbReference>
<dbReference type="GO" id="GO:0036064">
    <property type="term" value="C:ciliary basal body"/>
    <property type="evidence" value="ECO:0007669"/>
    <property type="project" value="Ensembl"/>
</dbReference>
<dbReference type="GO" id="GO:0005737">
    <property type="term" value="C:cytoplasm"/>
    <property type="evidence" value="ECO:0000250"/>
    <property type="project" value="UniProtKB"/>
</dbReference>
<dbReference type="GO" id="GO:0005829">
    <property type="term" value="C:cytosol"/>
    <property type="evidence" value="ECO:0007669"/>
    <property type="project" value="Ensembl"/>
</dbReference>
<dbReference type="GO" id="GO:0000776">
    <property type="term" value="C:kinetochore"/>
    <property type="evidence" value="ECO:0000314"/>
    <property type="project" value="UniProtKB"/>
</dbReference>
<dbReference type="GO" id="GO:0033597">
    <property type="term" value="C:mitotic checkpoint complex"/>
    <property type="evidence" value="ECO:0000266"/>
    <property type="project" value="ComplexPortal"/>
</dbReference>
<dbReference type="GO" id="GO:0000940">
    <property type="term" value="C:outer kinetochore"/>
    <property type="evidence" value="ECO:0000314"/>
    <property type="project" value="MGI"/>
</dbReference>
<dbReference type="GO" id="GO:0048471">
    <property type="term" value="C:perinuclear region of cytoplasm"/>
    <property type="evidence" value="ECO:0007669"/>
    <property type="project" value="Ensembl"/>
</dbReference>
<dbReference type="GO" id="GO:0005819">
    <property type="term" value="C:spindle"/>
    <property type="evidence" value="ECO:0007669"/>
    <property type="project" value="Ensembl"/>
</dbReference>
<dbReference type="GO" id="GO:0005524">
    <property type="term" value="F:ATP binding"/>
    <property type="evidence" value="ECO:0007669"/>
    <property type="project" value="UniProtKB-KW"/>
</dbReference>
<dbReference type="GO" id="GO:0106310">
    <property type="term" value="F:protein serine kinase activity"/>
    <property type="evidence" value="ECO:0007669"/>
    <property type="project" value="RHEA"/>
</dbReference>
<dbReference type="GO" id="GO:0004674">
    <property type="term" value="F:protein serine/threonine kinase activity"/>
    <property type="evidence" value="ECO:0007669"/>
    <property type="project" value="UniProtKB-KW"/>
</dbReference>
<dbReference type="GO" id="GO:0006915">
    <property type="term" value="P:apoptotic process"/>
    <property type="evidence" value="ECO:0007669"/>
    <property type="project" value="UniProtKB-KW"/>
</dbReference>
<dbReference type="GO" id="GO:0051301">
    <property type="term" value="P:cell division"/>
    <property type="evidence" value="ECO:0007669"/>
    <property type="project" value="UniProtKB-KW"/>
</dbReference>
<dbReference type="GO" id="GO:0007091">
    <property type="term" value="P:metaphase/anaphase transition of mitotic cell cycle"/>
    <property type="evidence" value="ECO:0000316"/>
    <property type="project" value="MGI"/>
</dbReference>
<dbReference type="GO" id="GO:0007094">
    <property type="term" value="P:mitotic spindle assembly checkpoint signaling"/>
    <property type="evidence" value="ECO:0000250"/>
    <property type="project" value="UniProtKB"/>
</dbReference>
<dbReference type="GO" id="GO:0071459">
    <property type="term" value="P:protein localization to chromosome, centromeric region"/>
    <property type="evidence" value="ECO:0000315"/>
    <property type="project" value="MGI"/>
</dbReference>
<dbReference type="FunFam" id="1.10.510.10:FF:000494">
    <property type="entry name" value="mitotic checkpoint serine/threonine-protein kinase BUB1 beta"/>
    <property type="match status" value="1"/>
</dbReference>
<dbReference type="FunFam" id="1.25.40.430:FF:000002">
    <property type="entry name" value="mitotic checkpoint serine/threonine-protein kinase BUB1 beta"/>
    <property type="match status" value="1"/>
</dbReference>
<dbReference type="Gene3D" id="1.25.40.430">
    <property type="match status" value="1"/>
</dbReference>
<dbReference type="Gene3D" id="1.10.510.10">
    <property type="entry name" value="Transferase(Phosphotransferase) domain 1"/>
    <property type="match status" value="1"/>
</dbReference>
<dbReference type="InterPro" id="IPR015661">
    <property type="entry name" value="Bub1/Mad3"/>
</dbReference>
<dbReference type="InterPro" id="IPR011009">
    <property type="entry name" value="Kinase-like_dom_sf"/>
</dbReference>
<dbReference type="InterPro" id="IPR013212">
    <property type="entry name" value="Mad3/Bub1_I"/>
</dbReference>
<dbReference type="InterPro" id="IPR000719">
    <property type="entry name" value="Prot_kinase_dom"/>
</dbReference>
<dbReference type="PANTHER" id="PTHR14030">
    <property type="entry name" value="MITOTIC CHECKPOINT SERINE/THREONINE-PROTEIN KINASE BUB1"/>
    <property type="match status" value="1"/>
</dbReference>
<dbReference type="PANTHER" id="PTHR14030:SF25">
    <property type="entry name" value="MITOTIC CHECKPOINT SERINE_THREONINE-PROTEIN KINASE BUB1 BETA"/>
    <property type="match status" value="1"/>
</dbReference>
<dbReference type="Pfam" id="PF08311">
    <property type="entry name" value="Mad3_BUB1_I"/>
    <property type="match status" value="1"/>
</dbReference>
<dbReference type="SMART" id="SM00777">
    <property type="entry name" value="Mad3_BUB1_I"/>
    <property type="match status" value="1"/>
</dbReference>
<dbReference type="SUPFAM" id="SSF56112">
    <property type="entry name" value="Protein kinase-like (PK-like)"/>
    <property type="match status" value="1"/>
</dbReference>
<dbReference type="PROSITE" id="PS51489">
    <property type="entry name" value="BUB1_N"/>
    <property type="match status" value="1"/>
</dbReference>
<dbReference type="PROSITE" id="PS50011">
    <property type="entry name" value="PROTEIN_KINASE_DOM"/>
    <property type="match status" value="1"/>
</dbReference>
<accession>Q9Z1S0</accession>
<accession>A2ARS1</accession>
<sequence length="1052" mass="118392">MAEASEAMCLEGAEWELSKENIQPLRHGRVMSTLQGALAKQESAGHTALQQQKRAFESEIRFYSGDDPLDVWDRYINWTEQNYPQGGKESNMSALVERAIEALQGETRYYNDPRFLSLWIKLGHLCNEPLDMYSYLQSQGIGVSLAQFYISWAEEYEARENFKKADIIFQEGIERKAEPLDRLQSQHRQFQSRVSRQAFLALGNEEEEALEPSEPQRSSLAELKSRGKKMARAPISRVGGALKAPGQSRGFLNAVPQPVHGNRRITVFDENADTASRTELSKPVAQPWMAPPVPRAKENELQPGPWSTDRPAGRRPHDNPASVTSIPSVLPSFTPYVEESAQQTVMTPCKIEPSINHVLSTRKPGREEGDPLQRVQSHQQGCEEKKEKMMYCKEKIYAGVGEFSFEEIRAEVFRKKLKERREAELLTSAKKREEMQKQIEEMERRLKAMQAVQQEGAGGQQEEKMPTEDPARLQIASGPQEMSGVPLSCSICPLSSNPREISPAENILQEQPDSKGSSMPFSIFDESLSDKKDKSPATGGPQVLNAQRRPLSVLKTTEVGTTNEDVSPDICDELTELEPLSEDAIITGFRNVTLCPNPEDTCDFARAARLASTPFHEILSSKGIAADPEGLLQEEDLDGKAAEAHHTVHHQALIIKKLSPIIEESREATHSSGFSRSSSSAPSTSSIKGFQLLEKLELTNDGAEDAIQSPWCSQYRLQLLKSLLELSAFAEFSVEDRPMPVLEIGKEIELGPEDYVIKQEHLTCDDYRLFWVAPRSSAELTMIKASSQPIPWDFYINLKLKERLNEDYDQLCSCCQYQDGHVVWYQYINCSTLQNLLQHSEFVTHEIIVLIIYNLLTIVEKLHRAEIVHGDLSPRSLILRNRIHDPYDYVNKDDHAVRIMDFSYSVDLRVQLDAFAYSGFRTAQILEGQKILANCSSPYHVDLLGIADLAHLLLFKEHLHVFWDGLLWKLSQSTSELKDSELWNKFFVRILNASDKSTVSVLGELAAEMGGAFDATFHSHLNRALWKLGKTISPEALLTQQDKQPGGSQSPA</sequence>
<proteinExistence type="evidence at protein level"/>
<keyword id="KW-0007">Acetylation</keyword>
<keyword id="KW-0053">Apoptosis</keyword>
<keyword id="KW-0067">ATP-binding</keyword>
<keyword id="KW-0131">Cell cycle</keyword>
<keyword id="KW-0132">Cell division</keyword>
<keyword id="KW-0137">Centromere</keyword>
<keyword id="KW-0158">Chromosome</keyword>
<keyword id="KW-0963">Cytoplasm</keyword>
<keyword id="KW-0418">Kinase</keyword>
<keyword id="KW-0995">Kinetochore</keyword>
<keyword id="KW-0498">Mitosis</keyword>
<keyword id="KW-0547">Nucleotide-binding</keyword>
<keyword id="KW-0539">Nucleus</keyword>
<keyword id="KW-0597">Phosphoprotein</keyword>
<keyword id="KW-1185">Reference proteome</keyword>
<keyword id="KW-0723">Serine/threonine-protein kinase</keyword>
<keyword id="KW-0808">Transferase</keyword>
<keyword id="KW-0043">Tumor suppressor</keyword>
<keyword id="KW-0832">Ubl conjugation</keyword>
<feature type="chain" id="PRO_0000085674" description="Mitotic checkpoint serine/threonine-protein kinase BUB1 beta">
    <location>
        <begin position="1"/>
        <end position="1052"/>
    </location>
</feature>
<feature type="domain" description="BUB1 N-terminal" evidence="5">
    <location>
        <begin position="56"/>
        <end position="219"/>
    </location>
</feature>
<feature type="domain" description="Protein kinase" evidence="4">
    <location>
        <begin position="756"/>
        <end position="1040"/>
    </location>
</feature>
<feature type="region of interest" description="Necessary for interaction with KNL1" evidence="1">
    <location>
        <begin position="146"/>
        <end position="179"/>
    </location>
</feature>
<feature type="region of interest" description="Disordered" evidence="6">
    <location>
        <begin position="206"/>
        <end position="256"/>
    </location>
</feature>
<feature type="region of interest" description="Disordered" evidence="6">
    <location>
        <begin position="272"/>
        <end position="327"/>
    </location>
</feature>
<feature type="region of interest" description="Disordered" evidence="6">
    <location>
        <begin position="361"/>
        <end position="381"/>
    </location>
</feature>
<feature type="region of interest" description="Disordered" evidence="6">
    <location>
        <begin position="496"/>
        <end position="552"/>
    </location>
</feature>
<feature type="short sequence motif" description="Nuclear localization signal" evidence="3">
    <location>
        <begin position="105"/>
        <end position="112"/>
    </location>
</feature>
<feature type="short sequence motif" description="D-box">
    <location>
        <begin position="217"/>
        <end position="225"/>
    </location>
</feature>
<feature type="compositionally biased region" description="Polar residues" evidence="6">
    <location>
        <begin position="508"/>
        <end position="520"/>
    </location>
</feature>
<feature type="active site" description="Proton acceptor" evidence="4">
    <location>
        <position position="871"/>
    </location>
</feature>
<feature type="binding site" evidence="4">
    <location>
        <begin position="762"/>
        <end position="770"/>
    </location>
    <ligand>
        <name>ATP</name>
        <dbReference type="ChEBI" id="CHEBI:30616"/>
    </ligand>
</feature>
<feature type="binding site" evidence="4">
    <location>
        <position position="784"/>
    </location>
    <ligand>
        <name>ATP</name>
        <dbReference type="ChEBI" id="CHEBI:30616"/>
    </ligand>
</feature>
<feature type="site" description="Cleavage; by caspase-3" evidence="2">
    <location>
        <begin position="572"/>
        <end position="573"/>
    </location>
</feature>
<feature type="site" description="Cleavage; by caspase-3" evidence="2">
    <location>
        <begin position="603"/>
        <end position="604"/>
    </location>
</feature>
<feature type="modified residue" description="N6-acetyllysine; by PCAF" evidence="2">
    <location>
        <position position="243"/>
    </location>
</feature>
<feature type="modified residue" description="Phosphoserine" evidence="2">
    <location>
        <position position="360"/>
    </location>
</feature>
<feature type="modified residue" description="Phosphoserine" evidence="2">
    <location>
        <position position="428"/>
    </location>
</feature>
<feature type="modified residue" description="Phosphoserine" evidence="2">
    <location>
        <position position="535"/>
    </location>
</feature>
<feature type="modified residue" description="Phosphoserine" evidence="2">
    <location>
        <position position="659"/>
    </location>
</feature>
<feature type="modified residue" description="Phosphoserine; by PLK1" evidence="2">
    <location>
        <position position="665"/>
    </location>
</feature>
<feature type="modified residue" description="Phosphoserine" evidence="2">
    <location>
        <position position="686"/>
    </location>
</feature>
<feature type="modified residue" description="Phosphothreonine; by PLK1" evidence="2">
    <location>
        <position position="781"/>
    </location>
</feature>
<feature type="modified residue" description="Phosphothreonine; by PLK1" evidence="2">
    <location>
        <position position="998"/>
    </location>
</feature>
<feature type="modified residue" description="Phosphoserine" evidence="2">
    <location>
        <position position="1033"/>
    </location>
</feature>
<feature type="modified residue" description="Phosphoserine" evidence="12">
    <location>
        <position position="1050"/>
    </location>
</feature>
<feature type="sequence conflict" description="In Ref. 1; AAD11940." evidence="11" ref="1">
    <original>A</original>
    <variation>T</variation>
    <location>
        <position position="275"/>
    </location>
</feature>
<feature type="sequence conflict" description="In Ref. 1; AAD11940." evidence="11" ref="1">
    <original>T</original>
    <variation>P</variation>
    <location>
        <position position="278"/>
    </location>
</feature>
<feature type="sequence conflict" description="In Ref. 1; AAD11940." evidence="11" ref="1">
    <original>E</original>
    <variation>D</variation>
    <location>
        <position position="664"/>
    </location>
</feature>
<feature type="sequence conflict" description="In Ref. 1; AAD11940." evidence="11" ref="1">
    <original>D</original>
    <variation>N</variation>
    <location>
        <position position="705"/>
    </location>
</feature>
<evidence type="ECO:0000250" key="1"/>
<evidence type="ECO:0000250" key="2">
    <source>
        <dbReference type="UniProtKB" id="O60566"/>
    </source>
</evidence>
<evidence type="ECO:0000255" key="3"/>
<evidence type="ECO:0000255" key="4">
    <source>
        <dbReference type="PROSITE-ProRule" id="PRU00159"/>
    </source>
</evidence>
<evidence type="ECO:0000255" key="5">
    <source>
        <dbReference type="PROSITE-ProRule" id="PRU00822"/>
    </source>
</evidence>
<evidence type="ECO:0000256" key="6">
    <source>
        <dbReference type="SAM" id="MobiDB-lite"/>
    </source>
</evidence>
<evidence type="ECO:0000269" key="7">
    <source>
    </source>
</evidence>
<evidence type="ECO:0000269" key="8">
    <source>
    </source>
</evidence>
<evidence type="ECO:0000269" key="9">
    <source>
    </source>
</evidence>
<evidence type="ECO:0000269" key="10">
    <source>
    </source>
</evidence>
<evidence type="ECO:0000305" key="11"/>
<evidence type="ECO:0007744" key="12">
    <source>
    </source>
</evidence>
<name>BUB1B_MOUSE</name>